<organism>
    <name type="scientific">Staphylococcus aureus (strain USA300)</name>
    <dbReference type="NCBI Taxonomy" id="367830"/>
    <lineage>
        <taxon>Bacteria</taxon>
        <taxon>Bacillati</taxon>
        <taxon>Bacillota</taxon>
        <taxon>Bacilli</taxon>
        <taxon>Bacillales</taxon>
        <taxon>Staphylococcaceae</taxon>
        <taxon>Staphylococcus</taxon>
    </lineage>
</organism>
<name>IF3_STAA3</name>
<proteinExistence type="inferred from homology"/>
<protein>
    <recommendedName>
        <fullName evidence="1">Translation initiation factor IF-3</fullName>
    </recommendedName>
</protein>
<evidence type="ECO:0000255" key="1">
    <source>
        <dbReference type="HAMAP-Rule" id="MF_00080"/>
    </source>
</evidence>
<comment type="function">
    <text evidence="1">IF-3 binds to the 30S ribosomal subunit and shifts the equilibrium between 70S ribosomes and their 50S and 30S subunits in favor of the free subunits, thus enhancing the availability of 30S subunits on which protein synthesis initiation begins.</text>
</comment>
<comment type="subunit">
    <text evidence="1">Monomer.</text>
</comment>
<comment type="subcellular location">
    <subcellularLocation>
        <location evidence="1">Cytoplasm</location>
    </subcellularLocation>
</comment>
<comment type="similarity">
    <text evidence="1">Belongs to the IF-3 family.</text>
</comment>
<keyword id="KW-0963">Cytoplasm</keyword>
<keyword id="KW-0396">Initiation factor</keyword>
<keyword id="KW-0648">Protein biosynthesis</keyword>
<reference key="1">
    <citation type="journal article" date="2006" name="Lancet">
        <title>Complete genome sequence of USA300, an epidemic clone of community-acquired meticillin-resistant Staphylococcus aureus.</title>
        <authorList>
            <person name="Diep B.A."/>
            <person name="Gill S.R."/>
            <person name="Chang R.F."/>
            <person name="Phan T.H."/>
            <person name="Chen J.H."/>
            <person name="Davidson M.G."/>
            <person name="Lin F."/>
            <person name="Lin J."/>
            <person name="Carleton H.A."/>
            <person name="Mongodin E.F."/>
            <person name="Sensabaugh G.F."/>
            <person name="Perdreau-Remington F."/>
        </authorList>
    </citation>
    <scope>NUCLEOTIDE SEQUENCE [LARGE SCALE GENOMIC DNA]</scope>
    <source>
        <strain>USA300</strain>
    </source>
</reference>
<feature type="chain" id="PRO_1000004566" description="Translation initiation factor IF-3">
    <location>
        <begin position="1"/>
        <end position="175"/>
    </location>
</feature>
<sequence>MSTIAKDQTQINDKIRAKELRLIGQDGEQIGVKSKREALEMAERVDLDLVVVAPNAKPPVARIMDYGKFKFEQQKKEKEMKKKQKIINVKEIRLSPTIEEHDFQTKLKNGRKFLTKGDKCKVSIRFRGRAITHKEIGQRVLEKYADECKDIATVEQKPKMDGRQMFIMLAPTAEK</sequence>
<accession>Q2FG56</accession>
<gene>
    <name evidence="1" type="primary">infC</name>
    <name type="ordered locus">SAUSA300_1627</name>
</gene>
<dbReference type="EMBL" id="CP000255">
    <property type="protein sequence ID" value="ABD21441.1"/>
    <property type="molecule type" value="Genomic_DNA"/>
</dbReference>
<dbReference type="RefSeq" id="WP_001791162.1">
    <property type="nucleotide sequence ID" value="NZ_CP027476.1"/>
</dbReference>
<dbReference type="SMR" id="Q2FG56"/>
<dbReference type="GeneID" id="66839860"/>
<dbReference type="KEGG" id="saa:SAUSA300_1627"/>
<dbReference type="HOGENOM" id="CLU_054919_3_2_9"/>
<dbReference type="Proteomes" id="UP000001939">
    <property type="component" value="Chromosome"/>
</dbReference>
<dbReference type="GO" id="GO:0005829">
    <property type="term" value="C:cytosol"/>
    <property type="evidence" value="ECO:0007669"/>
    <property type="project" value="TreeGrafter"/>
</dbReference>
<dbReference type="GO" id="GO:0016020">
    <property type="term" value="C:membrane"/>
    <property type="evidence" value="ECO:0007669"/>
    <property type="project" value="TreeGrafter"/>
</dbReference>
<dbReference type="GO" id="GO:0043022">
    <property type="term" value="F:ribosome binding"/>
    <property type="evidence" value="ECO:0007669"/>
    <property type="project" value="TreeGrafter"/>
</dbReference>
<dbReference type="GO" id="GO:0003743">
    <property type="term" value="F:translation initiation factor activity"/>
    <property type="evidence" value="ECO:0007669"/>
    <property type="project" value="UniProtKB-UniRule"/>
</dbReference>
<dbReference type="GO" id="GO:0032790">
    <property type="term" value="P:ribosome disassembly"/>
    <property type="evidence" value="ECO:0007669"/>
    <property type="project" value="TreeGrafter"/>
</dbReference>
<dbReference type="FunFam" id="3.10.20.80:FF:000001">
    <property type="entry name" value="Translation initiation factor IF-3"/>
    <property type="match status" value="1"/>
</dbReference>
<dbReference type="FunFam" id="3.30.110.10:FF:000001">
    <property type="entry name" value="Translation initiation factor IF-3"/>
    <property type="match status" value="1"/>
</dbReference>
<dbReference type="Gene3D" id="3.30.110.10">
    <property type="entry name" value="Translation initiation factor 3 (IF-3), C-terminal domain"/>
    <property type="match status" value="1"/>
</dbReference>
<dbReference type="Gene3D" id="3.10.20.80">
    <property type="entry name" value="Translation initiation factor 3 (IF-3), N-terminal domain"/>
    <property type="match status" value="1"/>
</dbReference>
<dbReference type="HAMAP" id="MF_00080">
    <property type="entry name" value="IF_3"/>
    <property type="match status" value="1"/>
</dbReference>
<dbReference type="InterPro" id="IPR036788">
    <property type="entry name" value="T_IF-3_C_sf"/>
</dbReference>
<dbReference type="InterPro" id="IPR036787">
    <property type="entry name" value="T_IF-3_N_sf"/>
</dbReference>
<dbReference type="InterPro" id="IPR019813">
    <property type="entry name" value="Translation_initiation_fac3_CS"/>
</dbReference>
<dbReference type="InterPro" id="IPR001288">
    <property type="entry name" value="Translation_initiation_fac_3"/>
</dbReference>
<dbReference type="InterPro" id="IPR019815">
    <property type="entry name" value="Translation_initiation_fac_3_C"/>
</dbReference>
<dbReference type="InterPro" id="IPR019814">
    <property type="entry name" value="Translation_initiation_fac_3_N"/>
</dbReference>
<dbReference type="NCBIfam" id="TIGR00168">
    <property type="entry name" value="infC"/>
    <property type="match status" value="1"/>
</dbReference>
<dbReference type="PANTHER" id="PTHR10938">
    <property type="entry name" value="TRANSLATION INITIATION FACTOR IF-3"/>
    <property type="match status" value="1"/>
</dbReference>
<dbReference type="PANTHER" id="PTHR10938:SF0">
    <property type="entry name" value="TRANSLATION INITIATION FACTOR IF-3, MITOCHONDRIAL"/>
    <property type="match status" value="1"/>
</dbReference>
<dbReference type="Pfam" id="PF00707">
    <property type="entry name" value="IF3_C"/>
    <property type="match status" value="1"/>
</dbReference>
<dbReference type="Pfam" id="PF05198">
    <property type="entry name" value="IF3_N"/>
    <property type="match status" value="1"/>
</dbReference>
<dbReference type="SUPFAM" id="SSF55200">
    <property type="entry name" value="Translation initiation factor IF3, C-terminal domain"/>
    <property type="match status" value="1"/>
</dbReference>
<dbReference type="SUPFAM" id="SSF54364">
    <property type="entry name" value="Translation initiation factor IF3, N-terminal domain"/>
    <property type="match status" value="1"/>
</dbReference>
<dbReference type="PROSITE" id="PS00938">
    <property type="entry name" value="IF3"/>
    <property type="match status" value="1"/>
</dbReference>